<gene>
    <name evidence="6" type="primary">ADT6</name>
    <name evidence="6" type="synonym">PDT6</name>
    <name evidence="8" type="ordered locus">At1g08250</name>
    <name evidence="9" type="ORF">T23G18.10</name>
</gene>
<protein>
    <recommendedName>
        <fullName evidence="7">Arogenate dehydratase/prephenate dehydratase 6, chloroplastic</fullName>
        <shortName evidence="6">AtADT6</shortName>
        <shortName evidence="6">AtPDT6</shortName>
        <ecNumber evidence="4">4.2.1.51</ecNumber>
        <ecNumber evidence="4">4.2.1.91</ecNumber>
    </recommendedName>
</protein>
<comment type="function">
    <text evidence="4">Converts the prephenate produced from the shikimate-chorismate pathway into phenylalanine (PubMed:17726025). Dehydratase that uses arogenate and prephenate as substrates (PubMed:17726025). Utilzes more efficiently arogenate than prephenate (PubMed:17726025).</text>
</comment>
<comment type="catalytic activity">
    <reaction evidence="4">
        <text>L-arogenate + H(+) = L-phenylalanine + CO2 + H2O</text>
        <dbReference type="Rhea" id="RHEA:12536"/>
        <dbReference type="ChEBI" id="CHEBI:15377"/>
        <dbReference type="ChEBI" id="CHEBI:15378"/>
        <dbReference type="ChEBI" id="CHEBI:16526"/>
        <dbReference type="ChEBI" id="CHEBI:58095"/>
        <dbReference type="ChEBI" id="CHEBI:58180"/>
        <dbReference type="EC" id="4.2.1.91"/>
    </reaction>
    <physiologicalReaction direction="left-to-right" evidence="4">
        <dbReference type="Rhea" id="RHEA:12537"/>
    </physiologicalReaction>
</comment>
<comment type="catalytic activity">
    <reaction evidence="4">
        <text>prephenate + H(+) = 3-phenylpyruvate + CO2 + H2O</text>
        <dbReference type="Rhea" id="RHEA:21648"/>
        <dbReference type="ChEBI" id="CHEBI:15377"/>
        <dbReference type="ChEBI" id="CHEBI:15378"/>
        <dbReference type="ChEBI" id="CHEBI:16526"/>
        <dbReference type="ChEBI" id="CHEBI:18005"/>
        <dbReference type="ChEBI" id="CHEBI:29934"/>
        <dbReference type="EC" id="4.2.1.51"/>
    </reaction>
    <physiologicalReaction direction="left-to-right" evidence="4">
        <dbReference type="Rhea" id="RHEA:21649"/>
    </physiologicalReaction>
</comment>
<comment type="biophysicochemical properties">
    <kinetics>
        <KM evidence="4">2.58 mM for arogenate</KM>
        <KM evidence="4">2.44 mM for prephenate</KM>
        <Vmax evidence="4">42.61 pmol/sec/ug enzyme with arogenate as substrate</Vmax>
        <Vmax evidence="4">0.4 pmol/sec/ug enzyme with prephenate as substrate</Vmax>
    </kinetics>
</comment>
<comment type="pathway">
    <text evidence="7">Amino-acid biosynthesis; L-phenylalanine biosynthesis; L-phenylalanine from L-arogenate: step 1/1.</text>
</comment>
<comment type="pathway">
    <text evidence="7">Amino-acid biosynthesis; L-phenylalanine biosynthesis; phenylpyruvate from prephenate: step 1/1.</text>
</comment>
<comment type="subcellular location">
    <subcellularLocation>
        <location evidence="5">Plastid</location>
        <location evidence="5">Chloroplast stroma</location>
    </subcellularLocation>
</comment>
<comment type="tissue specificity">
    <text evidence="4">Expressed in roots, leaves, stems, flowers and siliques.</text>
</comment>
<organism>
    <name type="scientific">Arabidopsis thaliana</name>
    <name type="common">Mouse-ear cress</name>
    <dbReference type="NCBI Taxonomy" id="3702"/>
    <lineage>
        <taxon>Eukaryota</taxon>
        <taxon>Viridiplantae</taxon>
        <taxon>Streptophyta</taxon>
        <taxon>Embryophyta</taxon>
        <taxon>Tracheophyta</taxon>
        <taxon>Spermatophyta</taxon>
        <taxon>Magnoliopsida</taxon>
        <taxon>eudicotyledons</taxon>
        <taxon>Gunneridae</taxon>
        <taxon>Pentapetalae</taxon>
        <taxon>rosids</taxon>
        <taxon>malvids</taxon>
        <taxon>Brassicales</taxon>
        <taxon>Brassicaceae</taxon>
        <taxon>Camelineae</taxon>
        <taxon>Arabidopsis</taxon>
    </lineage>
</organism>
<proteinExistence type="evidence at protein level"/>
<sequence length="413" mass="44802">MKALSSSSPILGASQPATATALIARSGRSEWQSSCAILTSKVISQEESESLPVPPVSGGVDHLNGHNSAAARVPGMNLVPIEKSDSNPLVPQHRHNPLKPLSMTDLSPAPMHGSNLRVAYQGVPGAYSEAAAGKAYPNCQAIPCDQFEVAFQAVELWIADRAVLPVENSLGGSIHRNYDLLLRHRLHIVGEVQLPVHHCLLALPGVRKEFLTRVISHPQGLAQCEHTLTKLGLNVAREAVDDTAGAAEFIASNNLRDTAAIASARAAEIYGLEILEDGIQDDVSNVTRFVMLAREPIIPRTDRPFKTSIVFAHEKGTSVLFKVLSAFAFRDISLTKIESRPNHNRPIRVVDDANVGTAKHFEYMFYVDFEASMAEARAQNALAEVQEFTSFLRVLGSYPMDMTPWSPTSSTSS</sequence>
<feature type="transit peptide" description="Chloroplast" evidence="1">
    <location>
        <begin position="1"/>
        <end position="44"/>
    </location>
</feature>
<feature type="chain" id="PRO_0000373795" description="Arogenate dehydratase/prephenate dehydratase 6, chloroplastic">
    <location>
        <begin position="45"/>
        <end position="413"/>
    </location>
</feature>
<feature type="domain" description="Prephenate dehydratase" evidence="2">
    <location>
        <begin position="117"/>
        <end position="294"/>
    </location>
</feature>
<feature type="domain" description="ACT" evidence="3">
    <location>
        <begin position="308"/>
        <end position="399"/>
    </location>
</feature>
<keyword id="KW-0028">Amino-acid biosynthesis</keyword>
<keyword id="KW-0057">Aromatic amino acid biosynthesis</keyword>
<keyword id="KW-0150">Chloroplast</keyword>
<keyword id="KW-0456">Lyase</keyword>
<keyword id="KW-0584">Phenylalanine biosynthesis</keyword>
<keyword id="KW-0934">Plastid</keyword>
<keyword id="KW-1185">Reference proteome</keyword>
<keyword id="KW-0809">Transit peptide</keyword>
<dbReference type="EC" id="4.2.1.51" evidence="4"/>
<dbReference type="EC" id="4.2.1.91" evidence="4"/>
<dbReference type="EMBL" id="DQ411468">
    <property type="protein sequence ID" value="ABD67754.1"/>
    <property type="molecule type" value="mRNA"/>
</dbReference>
<dbReference type="EMBL" id="AC011438">
    <property type="protein sequence ID" value="AAF18250.1"/>
    <property type="molecule type" value="Genomic_DNA"/>
</dbReference>
<dbReference type="EMBL" id="CP002684">
    <property type="protein sequence ID" value="AEE28265.1"/>
    <property type="molecule type" value="Genomic_DNA"/>
</dbReference>
<dbReference type="EMBL" id="AY056290">
    <property type="protein sequence ID" value="AAL07139.1"/>
    <property type="molecule type" value="mRNA"/>
</dbReference>
<dbReference type="EMBL" id="AY091181">
    <property type="protein sequence ID" value="AAM14120.1"/>
    <property type="molecule type" value="mRNA"/>
</dbReference>
<dbReference type="PIR" id="E86216">
    <property type="entry name" value="E86216"/>
</dbReference>
<dbReference type="RefSeq" id="NP_563809.1">
    <property type="nucleotide sequence ID" value="NM_100698.4"/>
</dbReference>
<dbReference type="SMR" id="Q9SGD6"/>
<dbReference type="FunCoup" id="Q9SGD6">
    <property type="interactions" value="249"/>
</dbReference>
<dbReference type="STRING" id="3702.Q9SGD6"/>
<dbReference type="PaxDb" id="3702-AT1G08250.1"/>
<dbReference type="ProteomicsDB" id="247000"/>
<dbReference type="EnsemblPlants" id="AT1G08250.1">
    <property type="protein sequence ID" value="AT1G08250.1"/>
    <property type="gene ID" value="AT1G08250"/>
</dbReference>
<dbReference type="GeneID" id="837345"/>
<dbReference type="Gramene" id="AT1G08250.1">
    <property type="protein sequence ID" value="AT1G08250.1"/>
    <property type="gene ID" value="AT1G08250"/>
</dbReference>
<dbReference type="KEGG" id="ath:AT1G08250"/>
<dbReference type="Araport" id="AT1G08250"/>
<dbReference type="TAIR" id="AT1G08250">
    <property type="gene designation" value="ADT6"/>
</dbReference>
<dbReference type="eggNOG" id="KOG2797">
    <property type="taxonomic scope" value="Eukaryota"/>
</dbReference>
<dbReference type="HOGENOM" id="CLU_035008_4_1_1"/>
<dbReference type="InParanoid" id="Q9SGD6"/>
<dbReference type="OMA" id="YPNITIC"/>
<dbReference type="OrthoDB" id="2414662at2759"/>
<dbReference type="PhylomeDB" id="Q9SGD6"/>
<dbReference type="BioCyc" id="ARA:AT1G08250-MONOMER"/>
<dbReference type="BRENDA" id="4.2.1.91">
    <property type="organism ID" value="399"/>
</dbReference>
<dbReference type="SABIO-RK" id="Q9SGD6"/>
<dbReference type="UniPathway" id="UPA00121">
    <property type="reaction ID" value="UER00344"/>
</dbReference>
<dbReference type="UniPathway" id="UPA00121">
    <property type="reaction ID" value="UER00345"/>
</dbReference>
<dbReference type="PRO" id="PR:Q9SGD6"/>
<dbReference type="Proteomes" id="UP000006548">
    <property type="component" value="Chromosome 1"/>
</dbReference>
<dbReference type="ExpressionAtlas" id="Q9SGD6">
    <property type="expression patterns" value="baseline and differential"/>
</dbReference>
<dbReference type="GO" id="GO:0009507">
    <property type="term" value="C:chloroplast"/>
    <property type="evidence" value="ECO:0000314"/>
    <property type="project" value="TAIR"/>
</dbReference>
<dbReference type="GO" id="GO:0009570">
    <property type="term" value="C:chloroplast stroma"/>
    <property type="evidence" value="ECO:0007669"/>
    <property type="project" value="UniProtKB-SubCell"/>
</dbReference>
<dbReference type="GO" id="GO:0047769">
    <property type="term" value="F:arogenate dehydratase activity"/>
    <property type="evidence" value="ECO:0000314"/>
    <property type="project" value="TAIR"/>
</dbReference>
<dbReference type="GO" id="GO:0004664">
    <property type="term" value="F:prephenate dehydratase activity"/>
    <property type="evidence" value="ECO:0007669"/>
    <property type="project" value="UniProtKB-EC"/>
</dbReference>
<dbReference type="GO" id="GO:0009094">
    <property type="term" value="P:L-phenylalanine biosynthetic process"/>
    <property type="evidence" value="ECO:0007669"/>
    <property type="project" value="UniProtKB-UniPathway"/>
</dbReference>
<dbReference type="CDD" id="cd04905">
    <property type="entry name" value="ACT_CM-PDT"/>
    <property type="match status" value="1"/>
</dbReference>
<dbReference type="CDD" id="cd13631">
    <property type="entry name" value="PBP2_Ct-PDT_like"/>
    <property type="match status" value="1"/>
</dbReference>
<dbReference type="FunFam" id="3.30.70.260:FF:000019">
    <property type="entry name" value="Arogenate dehydratase"/>
    <property type="match status" value="1"/>
</dbReference>
<dbReference type="FunFam" id="3.40.190.10:FF:000028">
    <property type="entry name" value="Arogenate dehydratase"/>
    <property type="match status" value="1"/>
</dbReference>
<dbReference type="FunFam" id="3.40.190.10:FF:000031">
    <property type="entry name" value="Arogenate dehydratase"/>
    <property type="match status" value="1"/>
</dbReference>
<dbReference type="Gene3D" id="3.30.70.260">
    <property type="match status" value="1"/>
</dbReference>
<dbReference type="Gene3D" id="3.40.190.10">
    <property type="entry name" value="Periplasmic binding protein-like II"/>
    <property type="match status" value="2"/>
</dbReference>
<dbReference type="InterPro" id="IPR045865">
    <property type="entry name" value="ACT-like_dom_sf"/>
</dbReference>
<dbReference type="InterPro" id="IPR002912">
    <property type="entry name" value="ACT_dom"/>
</dbReference>
<dbReference type="InterPro" id="IPR001086">
    <property type="entry name" value="Preph_deHydtase"/>
</dbReference>
<dbReference type="InterPro" id="IPR018528">
    <property type="entry name" value="Preph_deHydtase_CS"/>
</dbReference>
<dbReference type="PANTHER" id="PTHR21022">
    <property type="entry name" value="PREPHENATE DEHYDRATASE P PROTEIN"/>
    <property type="match status" value="1"/>
</dbReference>
<dbReference type="PANTHER" id="PTHR21022:SF19">
    <property type="entry name" value="PREPHENATE DEHYDRATASE-RELATED"/>
    <property type="match status" value="1"/>
</dbReference>
<dbReference type="Pfam" id="PF00800">
    <property type="entry name" value="PDT"/>
    <property type="match status" value="1"/>
</dbReference>
<dbReference type="SUPFAM" id="SSF55021">
    <property type="entry name" value="ACT-like"/>
    <property type="match status" value="1"/>
</dbReference>
<dbReference type="SUPFAM" id="SSF53850">
    <property type="entry name" value="Periplasmic binding protein-like II"/>
    <property type="match status" value="1"/>
</dbReference>
<dbReference type="PROSITE" id="PS51671">
    <property type="entry name" value="ACT"/>
    <property type="match status" value="1"/>
</dbReference>
<dbReference type="PROSITE" id="PS00857">
    <property type="entry name" value="PREPHENATE_DEHYDR_1"/>
    <property type="match status" value="1"/>
</dbReference>
<dbReference type="PROSITE" id="PS00858">
    <property type="entry name" value="PREPHENATE_DEHYDR_2"/>
    <property type="match status" value="1"/>
</dbReference>
<dbReference type="PROSITE" id="PS51171">
    <property type="entry name" value="PREPHENATE_DEHYDR_3"/>
    <property type="match status" value="1"/>
</dbReference>
<name>AROD6_ARATH</name>
<evidence type="ECO:0000255" key="1"/>
<evidence type="ECO:0000255" key="2">
    <source>
        <dbReference type="PROSITE-ProRule" id="PRU00517"/>
    </source>
</evidence>
<evidence type="ECO:0000255" key="3">
    <source>
        <dbReference type="PROSITE-ProRule" id="PRU01007"/>
    </source>
</evidence>
<evidence type="ECO:0000269" key="4">
    <source>
    </source>
</evidence>
<evidence type="ECO:0000269" key="5">
    <source>
    </source>
</evidence>
<evidence type="ECO:0000303" key="6">
    <source>
    </source>
</evidence>
<evidence type="ECO:0000305" key="7"/>
<evidence type="ECO:0000312" key="8">
    <source>
        <dbReference type="Araport" id="AT1G08250"/>
    </source>
</evidence>
<evidence type="ECO:0000312" key="9">
    <source>
        <dbReference type="EMBL" id="AAF18250.1"/>
    </source>
</evidence>
<reference key="1">
    <citation type="submission" date="2006-02" db="EMBL/GenBank/DDBJ databases">
        <authorList>
            <person name="Matringe M."/>
            <person name="Grisollet D."/>
            <person name="Rippert P."/>
        </authorList>
    </citation>
    <scope>NUCLEOTIDE SEQUENCE [MRNA]</scope>
    <source>
        <strain>cv. Columbia</strain>
    </source>
</reference>
<reference key="2">
    <citation type="journal article" date="2000" name="Nature">
        <title>Sequence and analysis of chromosome 1 of the plant Arabidopsis thaliana.</title>
        <authorList>
            <person name="Theologis A."/>
            <person name="Ecker J.R."/>
            <person name="Palm C.J."/>
            <person name="Federspiel N.A."/>
            <person name="Kaul S."/>
            <person name="White O."/>
            <person name="Alonso J."/>
            <person name="Altafi H."/>
            <person name="Araujo R."/>
            <person name="Bowman C.L."/>
            <person name="Brooks S.Y."/>
            <person name="Buehler E."/>
            <person name="Chan A."/>
            <person name="Chao Q."/>
            <person name="Chen H."/>
            <person name="Cheuk R.F."/>
            <person name="Chin C.W."/>
            <person name="Chung M.K."/>
            <person name="Conn L."/>
            <person name="Conway A.B."/>
            <person name="Conway A.R."/>
            <person name="Creasy T.H."/>
            <person name="Dewar K."/>
            <person name="Dunn P."/>
            <person name="Etgu P."/>
            <person name="Feldblyum T.V."/>
            <person name="Feng J.-D."/>
            <person name="Fong B."/>
            <person name="Fujii C.Y."/>
            <person name="Gill J.E."/>
            <person name="Goldsmith A.D."/>
            <person name="Haas B."/>
            <person name="Hansen N.F."/>
            <person name="Hughes B."/>
            <person name="Huizar L."/>
            <person name="Hunter J.L."/>
            <person name="Jenkins J."/>
            <person name="Johnson-Hopson C."/>
            <person name="Khan S."/>
            <person name="Khaykin E."/>
            <person name="Kim C.J."/>
            <person name="Koo H.L."/>
            <person name="Kremenetskaia I."/>
            <person name="Kurtz D.B."/>
            <person name="Kwan A."/>
            <person name="Lam B."/>
            <person name="Langin-Hooper S."/>
            <person name="Lee A."/>
            <person name="Lee J.M."/>
            <person name="Lenz C.A."/>
            <person name="Li J.H."/>
            <person name="Li Y.-P."/>
            <person name="Lin X."/>
            <person name="Liu S.X."/>
            <person name="Liu Z.A."/>
            <person name="Luros J.S."/>
            <person name="Maiti R."/>
            <person name="Marziali A."/>
            <person name="Militscher J."/>
            <person name="Miranda M."/>
            <person name="Nguyen M."/>
            <person name="Nierman W.C."/>
            <person name="Osborne B.I."/>
            <person name="Pai G."/>
            <person name="Peterson J."/>
            <person name="Pham P.K."/>
            <person name="Rizzo M."/>
            <person name="Rooney T."/>
            <person name="Rowley D."/>
            <person name="Sakano H."/>
            <person name="Salzberg S.L."/>
            <person name="Schwartz J.R."/>
            <person name="Shinn P."/>
            <person name="Southwick A.M."/>
            <person name="Sun H."/>
            <person name="Tallon L.J."/>
            <person name="Tambunga G."/>
            <person name="Toriumi M.J."/>
            <person name="Town C.D."/>
            <person name="Utterback T."/>
            <person name="Van Aken S."/>
            <person name="Vaysberg M."/>
            <person name="Vysotskaia V.S."/>
            <person name="Walker M."/>
            <person name="Wu D."/>
            <person name="Yu G."/>
            <person name="Fraser C.M."/>
            <person name="Venter J.C."/>
            <person name="Davis R.W."/>
        </authorList>
    </citation>
    <scope>NUCLEOTIDE SEQUENCE [LARGE SCALE GENOMIC DNA]</scope>
    <source>
        <strain>cv. Columbia</strain>
    </source>
</reference>
<reference key="3">
    <citation type="journal article" date="2017" name="Plant J.">
        <title>Araport11: a complete reannotation of the Arabidopsis thaliana reference genome.</title>
        <authorList>
            <person name="Cheng C.Y."/>
            <person name="Krishnakumar V."/>
            <person name="Chan A.P."/>
            <person name="Thibaud-Nissen F."/>
            <person name="Schobel S."/>
            <person name="Town C.D."/>
        </authorList>
    </citation>
    <scope>GENOME REANNOTATION</scope>
    <source>
        <strain>cv. Columbia</strain>
    </source>
</reference>
<reference key="4">
    <citation type="journal article" date="2003" name="Science">
        <title>Empirical analysis of transcriptional activity in the Arabidopsis genome.</title>
        <authorList>
            <person name="Yamada K."/>
            <person name="Lim J."/>
            <person name="Dale J.M."/>
            <person name="Chen H."/>
            <person name="Shinn P."/>
            <person name="Palm C.J."/>
            <person name="Southwick A.M."/>
            <person name="Wu H.C."/>
            <person name="Kim C.J."/>
            <person name="Nguyen M."/>
            <person name="Pham P.K."/>
            <person name="Cheuk R.F."/>
            <person name="Karlin-Newmann G."/>
            <person name="Liu S.X."/>
            <person name="Lam B."/>
            <person name="Sakano H."/>
            <person name="Wu T."/>
            <person name="Yu G."/>
            <person name="Miranda M."/>
            <person name="Quach H.L."/>
            <person name="Tripp M."/>
            <person name="Chang C.H."/>
            <person name="Lee J.M."/>
            <person name="Toriumi M.J."/>
            <person name="Chan M.M."/>
            <person name="Tang C.C."/>
            <person name="Onodera C.S."/>
            <person name="Deng J.M."/>
            <person name="Akiyama K."/>
            <person name="Ansari Y."/>
            <person name="Arakawa T."/>
            <person name="Banh J."/>
            <person name="Banno F."/>
            <person name="Bowser L."/>
            <person name="Brooks S.Y."/>
            <person name="Carninci P."/>
            <person name="Chao Q."/>
            <person name="Choy N."/>
            <person name="Enju A."/>
            <person name="Goldsmith A.D."/>
            <person name="Gurjal M."/>
            <person name="Hansen N.F."/>
            <person name="Hayashizaki Y."/>
            <person name="Johnson-Hopson C."/>
            <person name="Hsuan V.W."/>
            <person name="Iida K."/>
            <person name="Karnes M."/>
            <person name="Khan S."/>
            <person name="Koesema E."/>
            <person name="Ishida J."/>
            <person name="Jiang P.X."/>
            <person name="Jones T."/>
            <person name="Kawai J."/>
            <person name="Kamiya A."/>
            <person name="Meyers C."/>
            <person name="Nakajima M."/>
            <person name="Narusaka M."/>
            <person name="Seki M."/>
            <person name="Sakurai T."/>
            <person name="Satou M."/>
            <person name="Tamse R."/>
            <person name="Vaysberg M."/>
            <person name="Wallender E.K."/>
            <person name="Wong C."/>
            <person name="Yamamura Y."/>
            <person name="Yuan S."/>
            <person name="Shinozaki K."/>
            <person name="Davis R.W."/>
            <person name="Theologis A."/>
            <person name="Ecker J.R."/>
        </authorList>
    </citation>
    <scope>NUCLEOTIDE SEQUENCE [LARGE SCALE MRNA]</scope>
    <source>
        <strain>cv. Columbia</strain>
    </source>
</reference>
<reference key="5">
    <citation type="journal article" date="2007" name="J. Biol. Chem.">
        <title>Phenylalanine biosynthesis in Arabidopsis thaliana. Identification and characterization of arogenate dehydratases.</title>
        <authorList>
            <person name="Cho M.-H."/>
            <person name="Corea O.R.A."/>
            <person name="Yang H."/>
            <person name="Bedgar D.L."/>
            <person name="Laskar D.D."/>
            <person name="Anterola A.M."/>
            <person name="Moog-Anterola F.A."/>
            <person name="Hood R.L."/>
            <person name="Kohalmi S.E."/>
            <person name="Bernards M.A."/>
            <person name="Kang C."/>
            <person name="Davin L.B."/>
            <person name="Lewis N.G."/>
        </authorList>
    </citation>
    <scope>FUNCTION</scope>
    <scope>CATALYTIC ACTIVITY</scope>
    <scope>TISSUE SPECIFICITY</scope>
    <scope>BIOPHYSICOCHEMICAL PROPERTIES</scope>
</reference>
<reference key="6">
    <citation type="journal article" date="2009" name="Plant Physiol.">
        <title>Tyrosine and phenylalanine are synthesized within the plastids in Arabidopsis.</title>
        <authorList>
            <person name="Rippert P."/>
            <person name="Puyaubert J."/>
            <person name="Grisollet D."/>
            <person name="Derrier L."/>
            <person name="Matringe M."/>
        </authorList>
    </citation>
    <scope>SUBCELLULAR LOCATION</scope>
</reference>
<accession>Q9SGD6</accession>